<dbReference type="EC" id="2.3.1.9" evidence="5"/>
<dbReference type="EMBL" id="AAHF01000013">
    <property type="protein sequence ID" value="EAL85169.1"/>
    <property type="molecule type" value="Genomic_DNA"/>
</dbReference>
<dbReference type="RefSeq" id="XP_747207.1">
    <property type="nucleotide sequence ID" value="XM_742114.1"/>
</dbReference>
<dbReference type="PDB" id="6AQP">
    <property type="method" value="X-ray"/>
    <property type="resolution" value="1.80 A"/>
    <property type="chains" value="A/B/C/D=1-398"/>
</dbReference>
<dbReference type="PDB" id="6ARE">
    <property type="method" value="X-ray"/>
    <property type="resolution" value="1.75 A"/>
    <property type="chains" value="A/B/C/D=1-398"/>
</dbReference>
<dbReference type="PDB" id="6ARF">
    <property type="method" value="X-ray"/>
    <property type="resolution" value="1.70 A"/>
    <property type="chains" value="A/B/C/D=1-398"/>
</dbReference>
<dbReference type="PDB" id="6ARG">
    <property type="method" value="X-ray"/>
    <property type="resolution" value="1.78 A"/>
    <property type="chains" value="A/B/C/D=1-398"/>
</dbReference>
<dbReference type="PDB" id="6ARL">
    <property type="method" value="X-ray"/>
    <property type="resolution" value="1.90 A"/>
    <property type="chains" value="A/B/C/D=1-398"/>
</dbReference>
<dbReference type="PDB" id="6ARR">
    <property type="method" value="X-ray"/>
    <property type="resolution" value="1.82 A"/>
    <property type="chains" value="A/B/C/D=1-398"/>
</dbReference>
<dbReference type="PDB" id="6ART">
    <property type="method" value="X-ray"/>
    <property type="resolution" value="2.25 A"/>
    <property type="chains" value="A/B/C/D=1-398"/>
</dbReference>
<dbReference type="PDBsum" id="6AQP"/>
<dbReference type="PDBsum" id="6ARE"/>
<dbReference type="PDBsum" id="6ARF"/>
<dbReference type="PDBsum" id="6ARG"/>
<dbReference type="PDBsum" id="6ARL"/>
<dbReference type="PDBsum" id="6ARR"/>
<dbReference type="PDBsum" id="6ART"/>
<dbReference type="SMR" id="Q4WCL5"/>
<dbReference type="FunCoup" id="Q4WCL5">
    <property type="interactions" value="599"/>
</dbReference>
<dbReference type="STRING" id="330879.Q4WCL5"/>
<dbReference type="SwissPalm" id="Q4WCL5"/>
<dbReference type="EnsemblFungi" id="EAL85169">
    <property type="protein sequence ID" value="EAL85169"/>
    <property type="gene ID" value="AFUA_8G04000"/>
</dbReference>
<dbReference type="GeneID" id="3504871"/>
<dbReference type="KEGG" id="afm:AFUA_8G04000"/>
<dbReference type="eggNOG" id="KOG1390">
    <property type="taxonomic scope" value="Eukaryota"/>
</dbReference>
<dbReference type="HOGENOM" id="CLU_031026_0_1_1"/>
<dbReference type="InParanoid" id="Q4WCL5"/>
<dbReference type="OMA" id="ICPSIAI"/>
<dbReference type="OrthoDB" id="5404651at2759"/>
<dbReference type="UniPathway" id="UPA00058">
    <property type="reaction ID" value="UER00101"/>
</dbReference>
<dbReference type="PHI-base" id="PHI:2529"/>
<dbReference type="Proteomes" id="UP000002530">
    <property type="component" value="Chromosome 8"/>
</dbReference>
<dbReference type="GO" id="GO:0005829">
    <property type="term" value="C:cytosol"/>
    <property type="evidence" value="ECO:0007669"/>
    <property type="project" value="UniProtKB-SubCell"/>
</dbReference>
<dbReference type="GO" id="GO:0005739">
    <property type="term" value="C:mitochondrion"/>
    <property type="evidence" value="ECO:0000318"/>
    <property type="project" value="GO_Central"/>
</dbReference>
<dbReference type="GO" id="GO:0003985">
    <property type="term" value="F:acetyl-CoA C-acetyltransferase activity"/>
    <property type="evidence" value="ECO:0000318"/>
    <property type="project" value="GO_Central"/>
</dbReference>
<dbReference type="GO" id="GO:0046872">
    <property type="term" value="F:metal ion binding"/>
    <property type="evidence" value="ECO:0007669"/>
    <property type="project" value="UniProtKB-KW"/>
</dbReference>
<dbReference type="GO" id="GO:0006696">
    <property type="term" value="P:ergosterol biosynthetic process"/>
    <property type="evidence" value="ECO:0000318"/>
    <property type="project" value="GO_Central"/>
</dbReference>
<dbReference type="CDD" id="cd00751">
    <property type="entry name" value="thiolase"/>
    <property type="match status" value="1"/>
</dbReference>
<dbReference type="FunFam" id="3.40.47.10:FF:000007">
    <property type="entry name" value="acetyl-CoA acetyltransferase, mitochondrial"/>
    <property type="match status" value="1"/>
</dbReference>
<dbReference type="Gene3D" id="3.40.47.10">
    <property type="match status" value="1"/>
</dbReference>
<dbReference type="InterPro" id="IPR002155">
    <property type="entry name" value="Thiolase"/>
</dbReference>
<dbReference type="InterPro" id="IPR016039">
    <property type="entry name" value="Thiolase-like"/>
</dbReference>
<dbReference type="InterPro" id="IPR020615">
    <property type="entry name" value="Thiolase_acyl_enz_int_AS"/>
</dbReference>
<dbReference type="InterPro" id="IPR020617">
    <property type="entry name" value="Thiolase_C"/>
</dbReference>
<dbReference type="InterPro" id="IPR020613">
    <property type="entry name" value="Thiolase_CS"/>
</dbReference>
<dbReference type="InterPro" id="IPR020616">
    <property type="entry name" value="Thiolase_N"/>
</dbReference>
<dbReference type="NCBIfam" id="TIGR01930">
    <property type="entry name" value="AcCoA-C-Actrans"/>
    <property type="match status" value="1"/>
</dbReference>
<dbReference type="PANTHER" id="PTHR18919:SF165">
    <property type="entry name" value="ACETYL-COA ACETYLTRANSFERASE"/>
    <property type="match status" value="1"/>
</dbReference>
<dbReference type="PANTHER" id="PTHR18919">
    <property type="entry name" value="ACETYL-COA C-ACYLTRANSFERASE"/>
    <property type="match status" value="1"/>
</dbReference>
<dbReference type="Pfam" id="PF02803">
    <property type="entry name" value="Thiolase_C"/>
    <property type="match status" value="1"/>
</dbReference>
<dbReference type="Pfam" id="PF00108">
    <property type="entry name" value="Thiolase_N"/>
    <property type="match status" value="1"/>
</dbReference>
<dbReference type="PIRSF" id="PIRSF000429">
    <property type="entry name" value="Ac-CoA_Ac_transf"/>
    <property type="match status" value="1"/>
</dbReference>
<dbReference type="SUPFAM" id="SSF53901">
    <property type="entry name" value="Thiolase-like"/>
    <property type="match status" value="2"/>
</dbReference>
<dbReference type="PROSITE" id="PS00098">
    <property type="entry name" value="THIOLASE_1"/>
    <property type="match status" value="1"/>
</dbReference>
<dbReference type="PROSITE" id="PS00737">
    <property type="entry name" value="THIOLASE_2"/>
    <property type="match status" value="1"/>
</dbReference>
<gene>
    <name evidence="7" type="primary">erg10B</name>
    <name evidence="6" type="synonym">erg10</name>
    <name type="ORF">AFUA_8G04000</name>
</gene>
<name>ER10B_ASPFU</name>
<sequence length="398" mass="40909">MSSLPAVYIVSSARTPVGSFLGSLSSLTAPQLGAHAIKAALAKVDGLKPSDVQEVFFGNVISANVGQNPARQCALGAGLEESTICTTVNKVCASGLKAIILGAQTIMTGNADVVVAGGTESMSNAPHYLPNLRTGAKYGHQSLVDGIMKDGLTDAGKQELMGLQAEECAQDHGFSREQQDEYAIRTYEKAQAAQKAGLFDEEIAPIQLPGFRGKPDVTVTQDEEPKNLNPEKLRAIKPAFIPGSGTVTAPNSSPLNDGAAAVVLVSEAKLKELNLKPVAKILGWGDAAQQPSKFTTAPALAIPKALKHAGVGQDAIDAFEINEAFSVVALANMKLLGIPEEKVNLHGGAVAIGHPIGASGARILTTLLGVLKAKKGKLGCAGICNGGGGASALVVELL</sequence>
<comment type="function">
    <text evidence="5 10 11">Acetyl-CoA acetyltransferase; part of the first module of ergosterol biosynthesis pathway that includes the early steps of the pathway, conserved across all eukaryotes, and which results in the formation of mevalonate from acetyl-coenzyme A (acetyl-CoA) (Ref.6). Erg10B catalyzes the formation of acetoacetyl-CoA from acetyl-CoA (Ref.6). The first module starts with the action of the cytosolic acetyl-CoA acetyltransferase erg10B that catalyzes the formation of acetoacetyl-CoA. The hydroxymethylglutaryl-CoA synthases erg13A and erg13B then condense acetyl-CoA with acetoacetyl-CoA to form HMG-CoA. The rate-limiting step of the early module is the reduction to mevalonate by the 3-hydroxy-3-methylglutaryl-coenzyme A (HMG-CoA) reductases hmg1 and hmg2. Mevalonate is also a precursor for the extracellular siderophore triacetylfusarinine C (TAFC) (Probable) (PubMed:16110826, PubMed:22106303).</text>
</comment>
<comment type="catalytic activity">
    <reaction evidence="2 5">
        <text>2 acetyl-CoA = acetoacetyl-CoA + CoA</text>
        <dbReference type="Rhea" id="RHEA:21036"/>
        <dbReference type="ChEBI" id="CHEBI:57286"/>
        <dbReference type="ChEBI" id="CHEBI:57287"/>
        <dbReference type="ChEBI" id="CHEBI:57288"/>
        <dbReference type="EC" id="2.3.1.9"/>
    </reaction>
    <physiologicalReaction direction="left-to-right" evidence="5">
        <dbReference type="Rhea" id="RHEA:21037"/>
    </physiologicalReaction>
</comment>
<comment type="cofactor">
    <cofactor evidence="5">
        <name>K(+)</name>
        <dbReference type="ChEBI" id="CHEBI:29103"/>
    </cofactor>
</comment>
<comment type="activity regulation">
    <text evidence="5">Activity is increased by monovalent cations such as K(+), Rb(+) or Cs(+).</text>
</comment>
<comment type="biophysicochemical properties">
    <kinetics>
        <KM evidence="5">42 uM for acetoacetyl-CoA (in law salt conditions)</KM>
        <KM evidence="5">8 uM for acetoacetyl-CoA (in the presence of 100 mM NaCl)</KM>
        <KM evidence="5">8 uM for acetoacetyl-CoA (in the presence of 100 mM KCl)</KM>
    </kinetics>
</comment>
<comment type="pathway">
    <text evidence="5">Metabolic intermediate biosynthesis; (R)-mevalonate biosynthesis; (R)-mevalonate from acetyl-CoA: step 1/3.</text>
</comment>
<comment type="subunit">
    <text evidence="5">Homotetramer.</text>
</comment>
<comment type="subcellular location">
    <subcellularLocation>
        <location evidence="12">Cytoplasm</location>
        <location evidence="12">Cytosol</location>
    </subcellularLocation>
</comment>
<comment type="disruption phenotype">
    <text evidence="3 4">Leads to lethality.</text>
</comment>
<comment type="miscellaneous">
    <text evidence="5">Even though it is not involved in catalysis directly, the Cl(-) anion stabilizes the catalytic site via both direct and water-mediated hydrogen bonds to catalytic residues and residues adjacent.</text>
</comment>
<comment type="similarity">
    <text evidence="9">Belongs to the thiolase-like superfamily. Thiolase family.</text>
</comment>
<evidence type="ECO:0000250" key="1">
    <source>
        <dbReference type="UniProtKB" id="P24752"/>
    </source>
</evidence>
<evidence type="ECO:0000255" key="2">
    <source>
        <dbReference type="PROSITE-ProRule" id="PRU10020"/>
    </source>
</evidence>
<evidence type="ECO:0000269" key="3">
    <source>
    </source>
</evidence>
<evidence type="ECO:0000269" key="4">
    <source>
    </source>
</evidence>
<evidence type="ECO:0000269" key="5">
    <source ref="6"/>
</evidence>
<evidence type="ECO:0000303" key="6">
    <source>
    </source>
</evidence>
<evidence type="ECO:0000303" key="7">
    <source>
    </source>
</evidence>
<evidence type="ECO:0000303" key="8">
    <source ref="6"/>
</evidence>
<evidence type="ECO:0000305" key="9"/>
<evidence type="ECO:0000305" key="10">
    <source>
    </source>
</evidence>
<evidence type="ECO:0000305" key="11">
    <source>
    </source>
</evidence>
<evidence type="ECO:0000305" key="12">
    <source>
    </source>
</evidence>
<evidence type="ECO:0007744" key="13">
    <source>
        <dbReference type="PDB" id="6AQP"/>
    </source>
</evidence>
<evidence type="ECO:0007744" key="14">
    <source>
        <dbReference type="PDB" id="6ARE"/>
    </source>
</evidence>
<evidence type="ECO:0007744" key="15">
    <source>
        <dbReference type="PDB" id="6ARF"/>
    </source>
</evidence>
<evidence type="ECO:0007744" key="16">
    <source>
        <dbReference type="PDB" id="6ARG"/>
    </source>
</evidence>
<evidence type="ECO:0007744" key="17">
    <source>
        <dbReference type="PDB" id="6ARL"/>
    </source>
</evidence>
<evidence type="ECO:0007744" key="18">
    <source>
        <dbReference type="PDB" id="6ARR"/>
    </source>
</evidence>
<evidence type="ECO:0007744" key="19">
    <source>
        <dbReference type="PDB" id="6ART"/>
    </source>
</evidence>
<evidence type="ECO:0007829" key="20">
    <source>
        <dbReference type="PDB" id="6ARE"/>
    </source>
</evidence>
<evidence type="ECO:0007829" key="21">
    <source>
        <dbReference type="PDB" id="6ARF"/>
    </source>
</evidence>
<proteinExistence type="evidence at protein level"/>
<accession>Q4WCL5</accession>
<organism>
    <name type="scientific">Aspergillus fumigatus (strain ATCC MYA-4609 / CBS 101355 / FGSC A1100 / Af293)</name>
    <name type="common">Neosartorya fumigata</name>
    <dbReference type="NCBI Taxonomy" id="330879"/>
    <lineage>
        <taxon>Eukaryota</taxon>
        <taxon>Fungi</taxon>
        <taxon>Dikarya</taxon>
        <taxon>Ascomycota</taxon>
        <taxon>Pezizomycotina</taxon>
        <taxon>Eurotiomycetes</taxon>
        <taxon>Eurotiomycetidae</taxon>
        <taxon>Eurotiales</taxon>
        <taxon>Aspergillaceae</taxon>
        <taxon>Aspergillus</taxon>
        <taxon>Aspergillus subgen. Fumigati</taxon>
    </lineage>
</organism>
<protein>
    <recommendedName>
        <fullName evidence="8">Acetyl-CoA acetyltransferase erg10B, cytosolic</fullName>
        <ecNumber evidence="5">2.3.1.9</ecNumber>
    </recommendedName>
    <alternativeName>
        <fullName evidence="8">Acetoacetyl-CoA thiolase erg10B</fullName>
        <shortName evidence="8">ACAT</shortName>
    </alternativeName>
    <alternativeName>
        <fullName evidence="8">Cytosolic thiolase erg10B</fullName>
        <shortName evidence="8">CT</shortName>
    </alternativeName>
    <alternativeName>
        <fullName evidence="6">Ergosterol biosynthesis protein 10B</fullName>
    </alternativeName>
</protein>
<keyword id="KW-0002">3D-structure</keyword>
<keyword id="KW-0012">Acyltransferase</keyword>
<keyword id="KW-0963">Cytoplasm</keyword>
<keyword id="KW-0444">Lipid biosynthesis</keyword>
<keyword id="KW-0443">Lipid metabolism</keyword>
<keyword id="KW-0479">Metal-binding</keyword>
<keyword id="KW-0630">Potassium</keyword>
<keyword id="KW-1185">Reference proteome</keyword>
<keyword id="KW-0752">Steroid biosynthesis</keyword>
<keyword id="KW-0753">Steroid metabolism</keyword>
<keyword id="KW-0756">Sterol biosynthesis</keyword>
<keyword id="KW-1207">Sterol metabolism</keyword>
<keyword id="KW-0808">Transferase</keyword>
<feature type="chain" id="PRO_0000454146" description="Acetyl-CoA acetyltransferase erg10B, cytosolic">
    <location>
        <begin position="1"/>
        <end position="398"/>
    </location>
</feature>
<feature type="active site" description="Acyl-thioester intermediate" evidence="1">
    <location>
        <position position="92"/>
    </location>
</feature>
<feature type="active site" description="Proton acceptor" evidence="2">
    <location>
        <position position="354"/>
    </location>
</feature>
<feature type="active site" description="Proton acceptor" evidence="2">
    <location>
        <position position="384"/>
    </location>
</feature>
<feature type="binding site" evidence="5 13 15 16 17 18 19">
    <location>
        <position position="187"/>
    </location>
    <ligand>
        <name>K(+)</name>
        <dbReference type="ChEBI" id="CHEBI:29103"/>
    </ligand>
</feature>
<feature type="binding site" evidence="5 14">
    <location>
        <position position="229"/>
    </location>
    <ligand>
        <name>CoA</name>
        <dbReference type="ChEBI" id="CHEBI:57287"/>
    </ligand>
</feature>
<feature type="binding site" evidence="5 14">
    <location>
        <position position="232"/>
    </location>
    <ligand>
        <name>CoA</name>
        <dbReference type="ChEBI" id="CHEBI:57287"/>
    </ligand>
</feature>
<feature type="binding site" evidence="5 13 15 16 17 18 19">
    <location>
        <position position="249"/>
    </location>
    <ligand>
        <name>K(+)</name>
        <dbReference type="ChEBI" id="CHEBI:29103"/>
    </ligand>
</feature>
<feature type="binding site" evidence="5 13 15 16 17 18 19">
    <location>
        <position position="250"/>
    </location>
    <ligand>
        <name>K(+)</name>
        <dbReference type="ChEBI" id="CHEBI:29103"/>
    </ligand>
</feature>
<feature type="binding site" evidence="5 13 15 16 17 18 19">
    <location>
        <position position="252"/>
    </location>
    <ligand>
        <name>K(+)</name>
        <dbReference type="ChEBI" id="CHEBI:29103"/>
    </ligand>
</feature>
<feature type="binding site" evidence="5 14">
    <location>
        <position position="253"/>
    </location>
    <ligand>
        <name>CoA</name>
        <dbReference type="ChEBI" id="CHEBI:57287"/>
    </ligand>
</feature>
<feature type="binding site" evidence="5 13 15 16 17 18 19">
    <location>
        <position position="350"/>
    </location>
    <ligand>
        <name>K(+)</name>
        <dbReference type="ChEBI" id="CHEBI:29103"/>
    </ligand>
</feature>
<feature type="binding site" evidence="5 13 15 16 17 18 19">
    <location>
        <position position="385"/>
    </location>
    <ligand>
        <name>chloride</name>
        <dbReference type="ChEBI" id="CHEBI:17996"/>
    </ligand>
</feature>
<feature type="helix" evidence="21">
    <location>
        <begin position="1"/>
        <end position="3"/>
    </location>
</feature>
<feature type="strand" evidence="21">
    <location>
        <begin position="7"/>
        <end position="14"/>
    </location>
</feature>
<feature type="turn" evidence="21">
    <location>
        <begin position="23"/>
        <end position="26"/>
    </location>
</feature>
<feature type="helix" evidence="21">
    <location>
        <begin position="29"/>
        <end position="42"/>
    </location>
</feature>
<feature type="helix" evidence="21">
    <location>
        <begin position="49"/>
        <end position="51"/>
    </location>
</feature>
<feature type="strand" evidence="21">
    <location>
        <begin position="54"/>
        <end position="58"/>
    </location>
</feature>
<feature type="turn" evidence="20">
    <location>
        <begin position="63"/>
        <end position="65"/>
    </location>
</feature>
<feature type="helix" evidence="21">
    <location>
        <begin position="69"/>
        <end position="76"/>
    </location>
</feature>
<feature type="strand" evidence="21">
    <location>
        <begin position="84"/>
        <end position="89"/>
    </location>
</feature>
<feature type="helix" evidence="21">
    <location>
        <begin position="91"/>
        <end position="93"/>
    </location>
</feature>
<feature type="helix" evidence="21">
    <location>
        <begin position="94"/>
        <end position="107"/>
    </location>
</feature>
<feature type="strand" evidence="21">
    <location>
        <begin position="112"/>
        <end position="121"/>
    </location>
</feature>
<feature type="helix" evidence="21">
    <location>
        <begin position="122"/>
        <end position="124"/>
    </location>
</feature>
<feature type="strand" evidence="21">
    <location>
        <begin position="127"/>
        <end position="129"/>
    </location>
</feature>
<feature type="turn" evidence="21">
    <location>
        <begin position="132"/>
        <end position="134"/>
    </location>
</feature>
<feature type="strand" evidence="21">
    <location>
        <begin position="137"/>
        <end position="139"/>
    </location>
</feature>
<feature type="strand" evidence="21">
    <location>
        <begin position="141"/>
        <end position="145"/>
    </location>
</feature>
<feature type="helix" evidence="21">
    <location>
        <begin position="146"/>
        <end position="150"/>
    </location>
</feature>
<feature type="turn" evidence="21">
    <location>
        <begin position="155"/>
        <end position="157"/>
    </location>
</feature>
<feature type="helix" evidence="21">
    <location>
        <begin position="161"/>
        <end position="172"/>
    </location>
</feature>
<feature type="helix" evidence="21">
    <location>
        <begin position="176"/>
        <end position="195"/>
    </location>
</feature>
<feature type="turn" evidence="21">
    <location>
        <begin position="196"/>
        <end position="202"/>
    </location>
</feature>
<feature type="strand" evidence="21">
    <location>
        <begin position="206"/>
        <end position="208"/>
    </location>
</feature>
<feature type="strand" evidence="21">
    <location>
        <begin position="217"/>
        <end position="219"/>
    </location>
</feature>
<feature type="helix" evidence="21">
    <location>
        <begin position="225"/>
        <end position="227"/>
    </location>
</feature>
<feature type="helix" evidence="21">
    <location>
        <begin position="230"/>
        <end position="235"/>
    </location>
</feature>
<feature type="strand" evidence="21">
    <location>
        <begin position="239"/>
        <end position="241"/>
    </location>
</feature>
<feature type="turn" evidence="21">
    <location>
        <begin position="242"/>
        <end position="244"/>
    </location>
</feature>
<feature type="turn" evidence="20">
    <location>
        <begin position="249"/>
        <end position="251"/>
    </location>
</feature>
<feature type="strand" evidence="21">
    <location>
        <begin position="256"/>
        <end position="266"/>
    </location>
</feature>
<feature type="helix" evidence="21">
    <location>
        <begin position="267"/>
        <end position="272"/>
    </location>
</feature>
<feature type="strand" evidence="21">
    <location>
        <begin position="278"/>
        <end position="288"/>
    </location>
</feature>
<feature type="helix" evidence="21">
    <location>
        <begin position="291"/>
        <end position="297"/>
    </location>
</feature>
<feature type="helix" evidence="21">
    <location>
        <begin position="298"/>
        <end position="309"/>
    </location>
</feature>
<feature type="helix" evidence="21">
    <location>
        <begin position="313"/>
        <end position="315"/>
    </location>
</feature>
<feature type="strand" evidence="21">
    <location>
        <begin position="317"/>
        <end position="321"/>
    </location>
</feature>
<feature type="helix" evidence="21">
    <location>
        <begin position="326"/>
        <end position="336"/>
    </location>
</feature>
<feature type="helix" evidence="21">
    <location>
        <begin position="340"/>
        <end position="342"/>
    </location>
</feature>
<feature type="helix" evidence="21">
    <location>
        <begin position="349"/>
        <end position="352"/>
    </location>
</feature>
<feature type="helix" evidence="21">
    <location>
        <begin position="356"/>
        <end position="373"/>
    </location>
</feature>
<feature type="strand" evidence="21">
    <location>
        <begin position="377"/>
        <end position="385"/>
    </location>
</feature>
<feature type="turn" evidence="21">
    <location>
        <begin position="386"/>
        <end position="388"/>
    </location>
</feature>
<feature type="strand" evidence="21">
    <location>
        <begin position="389"/>
        <end position="397"/>
    </location>
</feature>
<reference key="1">
    <citation type="journal article" date="2005" name="Nature">
        <title>Genomic sequence of the pathogenic and allergenic filamentous fungus Aspergillus fumigatus.</title>
        <authorList>
            <person name="Nierman W.C."/>
            <person name="Pain A."/>
            <person name="Anderson M.J."/>
            <person name="Wortman J.R."/>
            <person name="Kim H.S."/>
            <person name="Arroyo J."/>
            <person name="Berriman M."/>
            <person name="Abe K."/>
            <person name="Archer D.B."/>
            <person name="Bermejo C."/>
            <person name="Bennett J.W."/>
            <person name="Bowyer P."/>
            <person name="Chen D."/>
            <person name="Collins M."/>
            <person name="Coulsen R."/>
            <person name="Davies R."/>
            <person name="Dyer P.S."/>
            <person name="Farman M.L."/>
            <person name="Fedorova N."/>
            <person name="Fedorova N.D."/>
            <person name="Feldblyum T.V."/>
            <person name="Fischer R."/>
            <person name="Fosker N."/>
            <person name="Fraser A."/>
            <person name="Garcia J.L."/>
            <person name="Garcia M.J."/>
            <person name="Goble A."/>
            <person name="Goldman G.H."/>
            <person name="Gomi K."/>
            <person name="Griffith-Jones S."/>
            <person name="Gwilliam R."/>
            <person name="Haas B.J."/>
            <person name="Haas H."/>
            <person name="Harris D.E."/>
            <person name="Horiuchi H."/>
            <person name="Huang J."/>
            <person name="Humphray S."/>
            <person name="Jimenez J."/>
            <person name="Keller N."/>
            <person name="Khouri H."/>
            <person name="Kitamoto K."/>
            <person name="Kobayashi T."/>
            <person name="Konzack S."/>
            <person name="Kulkarni R."/>
            <person name="Kumagai T."/>
            <person name="Lafton A."/>
            <person name="Latge J.-P."/>
            <person name="Li W."/>
            <person name="Lord A."/>
            <person name="Lu C."/>
            <person name="Majoros W.H."/>
            <person name="May G.S."/>
            <person name="Miller B.L."/>
            <person name="Mohamoud Y."/>
            <person name="Molina M."/>
            <person name="Monod M."/>
            <person name="Mouyna I."/>
            <person name="Mulligan S."/>
            <person name="Murphy L.D."/>
            <person name="O'Neil S."/>
            <person name="Paulsen I."/>
            <person name="Penalva M.A."/>
            <person name="Pertea M."/>
            <person name="Price C."/>
            <person name="Pritchard B.L."/>
            <person name="Quail M.A."/>
            <person name="Rabbinowitsch E."/>
            <person name="Rawlins N."/>
            <person name="Rajandream M.A."/>
            <person name="Reichard U."/>
            <person name="Renauld H."/>
            <person name="Robson G.D."/>
            <person name="Rodriguez de Cordoba S."/>
            <person name="Rodriguez-Pena J.M."/>
            <person name="Ronning C.M."/>
            <person name="Rutter S."/>
            <person name="Salzberg S.L."/>
            <person name="Sanchez M."/>
            <person name="Sanchez-Ferrero J.C."/>
            <person name="Saunders D."/>
            <person name="Seeger K."/>
            <person name="Squares R."/>
            <person name="Squares S."/>
            <person name="Takeuchi M."/>
            <person name="Tekaia F."/>
            <person name="Turner G."/>
            <person name="Vazquez de Aldana C.R."/>
            <person name="Weidman J."/>
            <person name="White O."/>
            <person name="Woodward J.R."/>
            <person name="Yu J.-H."/>
            <person name="Fraser C.M."/>
            <person name="Galagan J.E."/>
            <person name="Asai K."/>
            <person name="Machida M."/>
            <person name="Hall N."/>
            <person name="Barrell B.G."/>
            <person name="Denning D.W."/>
        </authorList>
    </citation>
    <scope>NUCLEOTIDE SEQUENCE [LARGE SCALE GENOMIC DNA]</scope>
    <source>
        <strain>ATCC MYA-4609 / CBS 101355 / FGSC A1100 / Af293</strain>
    </source>
</reference>
<reference key="2">
    <citation type="journal article" date="2005" name="Med. Mycol.">
        <title>The ergosterol biosynthesis pathway, transporter genes, and azole resistance in Aspergillus fumigatus.</title>
        <authorList>
            <person name="Ferreira M.E."/>
            <person name="Colombo A.L."/>
            <person name="Paulsen I."/>
            <person name="Ren Q."/>
            <person name="Wortman J."/>
            <person name="Huang J."/>
            <person name="Goldman M.H."/>
            <person name="Goldman G.H."/>
        </authorList>
    </citation>
    <scope>IDENTIFICATION</scope>
    <scope>FUNCTION</scope>
</reference>
<reference key="3">
    <citation type="journal article" date="2007" name="PLoS Pathog.">
        <title>Essential gene identification and drug target prioritization in Aspergillus fumigatus.</title>
        <authorList>
            <person name="Hu W."/>
            <person name="Sillaots S."/>
            <person name="Lemieux S."/>
            <person name="Davison J."/>
            <person name="Kauffman S."/>
            <person name="Breton A."/>
            <person name="Linteau A."/>
            <person name="Xin C."/>
            <person name="Bowman J."/>
            <person name="Becker J."/>
            <person name="Jiang B."/>
            <person name="Roemer T."/>
        </authorList>
    </citation>
    <scope>DISRUPTION PHENOTYPE</scope>
</reference>
<reference key="4">
    <citation type="journal article" date="2012" name="Proc. Natl. Acad. Sci. U.S.A.">
        <title>Mevalonate governs interdependency of ergosterol and siderophore biosyntheses in the fungal pathogen Aspergillus fumigatus.</title>
        <authorList>
            <person name="Yasmin S."/>
            <person name="Alcazar-Fuoli L."/>
            <person name="Gruendlinger M."/>
            <person name="Puempel T."/>
            <person name="Cairns T."/>
            <person name="Blatzer M."/>
            <person name="Lopez J.F."/>
            <person name="Grimalt J.O."/>
            <person name="Bignell E."/>
            <person name="Haas H."/>
        </authorList>
    </citation>
    <scope>FUNCTION</scope>
</reference>
<reference key="5">
    <citation type="journal article" date="2020" name="Appl. Environ. Microbiol.">
        <title>Characterization of Aspergillus fumigatus mitochondrial acetyl-CoA acetyltransferase as an antifungal target.</title>
        <authorList>
            <person name="Zhang Y."/>
            <person name="Wei W."/>
            <person name="Fan J."/>
            <person name="Jin C."/>
            <person name="Lu L."/>
            <person name="Fang W."/>
        </authorList>
    </citation>
    <scope>IDENTIFICATION</scope>
</reference>
<reference evidence="13 14 15 16 17 18 19" key="6">
    <citation type="journal article" date="2018" name="ACS Catal.">
        <title>Structure of Aspergillus fumigatus cytosolic thiolase: trapped tetrahedral reaction intermediates and activation by monovalent cations.</title>
        <authorList>
            <person name="Marshall A.C."/>
            <person name="Bond C.S."/>
            <person name="Bruning J.B."/>
        </authorList>
    </citation>
    <scope>X-RAY CRYSTALLOGRAPHY (1.70 ANGSTROMS)</scope>
    <scope>FUNCTION</scope>
    <scope>CATALYTIC ACTIVITY</scope>
    <scope>BIOPHYSICOCHEMICAL PROPERTIES</scope>
    <scope>COFACTOR</scope>
    <scope>ACTIVITY REGULATION</scope>
</reference>